<organism>
    <name type="scientific">Homo sapiens</name>
    <name type="common">Human</name>
    <dbReference type="NCBI Taxonomy" id="9606"/>
    <lineage>
        <taxon>Eukaryota</taxon>
        <taxon>Metazoa</taxon>
        <taxon>Chordata</taxon>
        <taxon>Craniata</taxon>
        <taxon>Vertebrata</taxon>
        <taxon>Euteleostomi</taxon>
        <taxon>Mammalia</taxon>
        <taxon>Eutheria</taxon>
        <taxon>Euarchontoglires</taxon>
        <taxon>Primates</taxon>
        <taxon>Haplorrhini</taxon>
        <taxon>Catarrhini</taxon>
        <taxon>Hominidae</taxon>
        <taxon>Homo</taxon>
    </lineage>
</organism>
<feature type="initiator methionine" description="Removed" evidence="7 9">
    <location>
        <position position="1"/>
    </location>
</feature>
<feature type="chain" id="PRO_0000314937" description="Arginine/serine-rich coiled-coil protein 2">
    <location>
        <begin position="2"/>
        <end position="434"/>
    </location>
</feature>
<feature type="region of interest" description="Disordered" evidence="2">
    <location>
        <begin position="1"/>
        <end position="230"/>
    </location>
</feature>
<feature type="coiled-coil region" evidence="1">
    <location>
        <begin position="230"/>
        <end position="270"/>
    </location>
</feature>
<feature type="compositionally biased region" description="Basic and acidic residues" evidence="2">
    <location>
        <begin position="1"/>
        <end position="27"/>
    </location>
</feature>
<feature type="compositionally biased region" description="Basic residues" evidence="2">
    <location>
        <begin position="35"/>
        <end position="51"/>
    </location>
</feature>
<feature type="compositionally biased region" description="Basic and acidic residues" evidence="2">
    <location>
        <begin position="66"/>
        <end position="111"/>
    </location>
</feature>
<feature type="compositionally biased region" description="Basic residues" evidence="2">
    <location>
        <begin position="112"/>
        <end position="214"/>
    </location>
</feature>
<feature type="modified residue" description="N-acetylalanine" evidence="7 9">
    <location>
        <position position="2"/>
    </location>
</feature>
<feature type="modified residue" description="Phosphoserine" evidence="9 10">
    <location>
        <position position="4"/>
    </location>
</feature>
<feature type="modified residue" description="Phosphothreonine" evidence="9">
    <location>
        <position position="6"/>
    </location>
</feature>
<feature type="modified residue" description="Phosphothreonine" evidence="9">
    <location>
        <position position="16"/>
    </location>
</feature>
<feature type="modified residue" description="Phosphoserine" evidence="9 10">
    <location>
        <position position="17"/>
    </location>
</feature>
<feature type="modified residue" description="Phosphoserine" evidence="6 8">
    <location>
        <position position="30"/>
    </location>
</feature>
<feature type="modified residue" description="Phosphoserine" evidence="5 6 8 9 10">
    <location>
        <position position="32"/>
    </location>
</feature>
<feature type="modified residue" description="Phosphoserine" evidence="9">
    <location>
        <position position="104"/>
    </location>
</feature>
<feature type="modified residue" description="Phosphoserine" evidence="10">
    <location>
        <position position="376"/>
    </location>
</feature>
<feature type="cross-link" description="Glycyl lysine isopeptide (Lys-Gly) (interchain with G-Cter in SUMO1); alternate" evidence="11">
    <location>
        <position position="375"/>
    </location>
</feature>
<feature type="cross-link" description="Glycyl lysine isopeptide (Lys-Gly) (interchain with G-Cter in SUMO2); alternate" evidence="12">
    <location>
        <position position="375"/>
    </location>
</feature>
<feature type="splice variant" id="VSP_030440" description="In isoform 2." evidence="3">
    <original>MAASDTERDGLAPEKTSPDRDKKKEQSEVSVSPRASKHHYSRSRSRSRERKRKSDNEGRKHRSRSRSKE</original>
    <variation>MKEENTGAGAEAKRTNFFLKQ</variation>
    <location>
        <begin position="1"/>
        <end position="69"/>
    </location>
</feature>
<feature type="sequence variant" id="VAR_038133" description="In dbSNP:rs17886684.">
    <original>H</original>
    <variation>R</variation>
    <location>
        <position position="88"/>
    </location>
</feature>
<feature type="sequence conflict" description="In Ref. 4; AAH67773." evidence="4" ref="4">
    <original>P</original>
    <variation>R</variation>
    <location>
        <position position="224"/>
    </location>
</feature>
<name>RSRC2_HUMAN</name>
<gene>
    <name type="primary">RSRC2</name>
</gene>
<accession>Q7L4I2</accession>
<accession>Q6N040</accession>
<accession>Q6NW16</accession>
<accession>Q9H864</accession>
<keyword id="KW-0007">Acetylation</keyword>
<keyword id="KW-0025">Alternative splicing</keyword>
<keyword id="KW-0175">Coiled coil</keyword>
<keyword id="KW-1017">Isopeptide bond</keyword>
<keyword id="KW-0597">Phosphoprotein</keyword>
<keyword id="KW-1267">Proteomics identification</keyword>
<keyword id="KW-1185">Reference proteome</keyword>
<keyword id="KW-0832">Ubl conjugation</keyword>
<protein>
    <recommendedName>
        <fullName>Arginine/serine-rich coiled-coil protein 2</fullName>
    </recommendedName>
</protein>
<evidence type="ECO:0000255" key="1"/>
<evidence type="ECO:0000256" key="2">
    <source>
        <dbReference type="SAM" id="MobiDB-lite"/>
    </source>
</evidence>
<evidence type="ECO:0000303" key="3">
    <source>
    </source>
</evidence>
<evidence type="ECO:0000305" key="4"/>
<evidence type="ECO:0007744" key="5">
    <source>
    </source>
</evidence>
<evidence type="ECO:0007744" key="6">
    <source>
    </source>
</evidence>
<evidence type="ECO:0007744" key="7">
    <source>
    </source>
</evidence>
<evidence type="ECO:0007744" key="8">
    <source>
    </source>
</evidence>
<evidence type="ECO:0007744" key="9">
    <source>
    </source>
</evidence>
<evidence type="ECO:0007744" key="10">
    <source>
    </source>
</evidence>
<evidence type="ECO:0007744" key="11">
    <source>
    </source>
</evidence>
<evidence type="ECO:0007744" key="12">
    <source>
    </source>
</evidence>
<dbReference type="EMBL" id="AB212664">
    <property type="protein sequence ID" value="BAE93762.1"/>
    <property type="molecule type" value="mRNA"/>
</dbReference>
<dbReference type="EMBL" id="BX640711">
    <property type="protein sequence ID" value="CAE45830.1"/>
    <property type="molecule type" value="mRNA"/>
</dbReference>
<dbReference type="EMBL" id="CH471054">
    <property type="protein sequence ID" value="EAW98327.1"/>
    <property type="status" value="ALT_SEQ"/>
    <property type="molecule type" value="Genomic_DNA"/>
</dbReference>
<dbReference type="EMBL" id="CH471054">
    <property type="protein sequence ID" value="EAW98330.1"/>
    <property type="molecule type" value="Genomic_DNA"/>
</dbReference>
<dbReference type="EMBL" id="BC008684">
    <property type="protein sequence ID" value="AAH08684.2"/>
    <property type="molecule type" value="mRNA"/>
</dbReference>
<dbReference type="EMBL" id="BC067773">
    <property type="protein sequence ID" value="AAH67773.1"/>
    <property type="molecule type" value="mRNA"/>
</dbReference>
<dbReference type="EMBL" id="AK023985">
    <property type="protein sequence ID" value="BAB14755.1"/>
    <property type="status" value="ALT_INIT"/>
    <property type="molecule type" value="mRNA"/>
</dbReference>
<dbReference type="CCDS" id="CCDS31920.1">
    <molecule id="Q7L4I2-1"/>
</dbReference>
<dbReference type="RefSeq" id="NP_075388.2">
    <molecule id="Q7L4I2-1"/>
    <property type="nucleotide sequence ID" value="NM_023012.5"/>
</dbReference>
<dbReference type="RefSeq" id="XP_016875322.1">
    <property type="nucleotide sequence ID" value="XM_017019833.1"/>
</dbReference>
<dbReference type="BioGRID" id="122398">
    <property type="interactions" value="76"/>
</dbReference>
<dbReference type="FunCoup" id="Q7L4I2">
    <property type="interactions" value="2635"/>
</dbReference>
<dbReference type="IntAct" id="Q7L4I2">
    <property type="interactions" value="55"/>
</dbReference>
<dbReference type="MINT" id="Q7L4I2"/>
<dbReference type="STRING" id="9606.ENSP00000330188"/>
<dbReference type="GlyGen" id="Q7L4I2">
    <property type="glycosylation" value="1 site, 1 O-linked glycan (1 site)"/>
</dbReference>
<dbReference type="iPTMnet" id="Q7L4I2"/>
<dbReference type="MetOSite" id="Q7L4I2"/>
<dbReference type="PhosphoSitePlus" id="Q7L4I2"/>
<dbReference type="BioMuta" id="RSRC2"/>
<dbReference type="DMDM" id="74739167"/>
<dbReference type="jPOST" id="Q7L4I2"/>
<dbReference type="MassIVE" id="Q7L4I2"/>
<dbReference type="PaxDb" id="9606-ENSP00000330188"/>
<dbReference type="PeptideAtlas" id="Q7L4I2"/>
<dbReference type="ProteomicsDB" id="68777">
    <molecule id="Q7L4I2-1"/>
</dbReference>
<dbReference type="ProteomicsDB" id="68778">
    <molecule id="Q7L4I2-2"/>
</dbReference>
<dbReference type="Pumba" id="Q7L4I2"/>
<dbReference type="Antibodypedia" id="31659">
    <property type="antibodies" value="115 antibodies from 19 providers"/>
</dbReference>
<dbReference type="DNASU" id="65117"/>
<dbReference type="Ensembl" id="ENST00000331738.12">
    <molecule id="Q7L4I2-1"/>
    <property type="protein sequence ID" value="ENSP00000330188.6"/>
    <property type="gene ID" value="ENSG00000111011.18"/>
</dbReference>
<dbReference type="GeneID" id="65117"/>
<dbReference type="KEGG" id="hsa:65117"/>
<dbReference type="MANE-Select" id="ENST00000331738.12">
    <property type="protein sequence ID" value="ENSP00000330188.6"/>
    <property type="RefSeq nucleotide sequence ID" value="NM_023012.6"/>
    <property type="RefSeq protein sequence ID" value="NP_075388.2"/>
</dbReference>
<dbReference type="UCSC" id="uc001ucr.4">
    <molecule id="Q7L4I2-1"/>
    <property type="organism name" value="human"/>
</dbReference>
<dbReference type="AGR" id="HGNC:30559"/>
<dbReference type="CTD" id="65117"/>
<dbReference type="DisGeNET" id="65117"/>
<dbReference type="GeneCards" id="RSRC2"/>
<dbReference type="HGNC" id="HGNC:30559">
    <property type="gene designation" value="RSRC2"/>
</dbReference>
<dbReference type="HPA" id="ENSG00000111011">
    <property type="expression patterns" value="Tissue enhanced (bone)"/>
</dbReference>
<dbReference type="MIM" id="619996">
    <property type="type" value="gene"/>
</dbReference>
<dbReference type="neXtProt" id="NX_Q7L4I2"/>
<dbReference type="OpenTargets" id="ENSG00000111011"/>
<dbReference type="PharmGKB" id="PA162402249"/>
<dbReference type="VEuPathDB" id="HostDB:ENSG00000111011"/>
<dbReference type="eggNOG" id="ENOG502QQ3C">
    <property type="taxonomic scope" value="Eukaryota"/>
</dbReference>
<dbReference type="GeneTree" id="ENSGT00730000111142"/>
<dbReference type="HOGENOM" id="CLU_051694_0_0_1"/>
<dbReference type="InParanoid" id="Q7L4I2"/>
<dbReference type="OMA" id="QEEMFKN"/>
<dbReference type="OrthoDB" id="1928974at2759"/>
<dbReference type="PAN-GO" id="Q7L4I2">
    <property type="GO annotations" value="0 GO annotations based on evolutionary models"/>
</dbReference>
<dbReference type="PhylomeDB" id="Q7L4I2"/>
<dbReference type="TreeFam" id="TF325523"/>
<dbReference type="PathwayCommons" id="Q7L4I2"/>
<dbReference type="SignaLink" id="Q7L4I2"/>
<dbReference type="BioGRID-ORCS" id="65117">
    <property type="hits" value="317 hits in 1144 CRISPR screens"/>
</dbReference>
<dbReference type="ChiTaRS" id="RSRC2">
    <property type="organism name" value="human"/>
</dbReference>
<dbReference type="GenomeRNAi" id="65117"/>
<dbReference type="Pharos" id="Q7L4I2">
    <property type="development level" value="Tdark"/>
</dbReference>
<dbReference type="PRO" id="PR:Q7L4I2"/>
<dbReference type="Proteomes" id="UP000005640">
    <property type="component" value="Chromosome 12"/>
</dbReference>
<dbReference type="RNAct" id="Q7L4I2">
    <property type="molecule type" value="protein"/>
</dbReference>
<dbReference type="Bgee" id="ENSG00000111011">
    <property type="expression patterns" value="Expressed in sural nerve and 211 other cell types or tissues"/>
</dbReference>
<dbReference type="ExpressionAtlas" id="Q7L4I2">
    <property type="expression patterns" value="baseline and differential"/>
</dbReference>
<dbReference type="GO" id="GO:0003723">
    <property type="term" value="F:RNA binding"/>
    <property type="evidence" value="ECO:0007005"/>
    <property type="project" value="UniProtKB"/>
</dbReference>
<dbReference type="InterPro" id="IPR028124">
    <property type="entry name" value="SMAP_dom"/>
</dbReference>
<dbReference type="PANTHER" id="PTHR22426">
    <property type="entry name" value="ARGININE_SERINE-RICH COILED-COIL PROTEIN 2"/>
    <property type="match status" value="1"/>
</dbReference>
<dbReference type="PANTHER" id="PTHR22426:SF2">
    <property type="entry name" value="ARGININE_SERINE-RICH COILED-COIL PROTEIN 2"/>
    <property type="match status" value="1"/>
</dbReference>
<dbReference type="Pfam" id="PF15477">
    <property type="entry name" value="SMAP"/>
    <property type="match status" value="1"/>
</dbReference>
<reference key="1">
    <citation type="submission" date="2005-04" db="EMBL/GenBank/DDBJ databases">
        <title>Identification of esophageal cancer gene.</title>
        <authorList>
            <person name="Kurehara H."/>
            <person name="Ishiguro H."/>
            <person name="Kuwabara Y."/>
            <person name="Kimura M."/>
            <person name="Haruki N."/>
            <person name="Sugiura H."/>
            <person name="Andoh T."/>
            <person name="Tomoda K."/>
            <person name="Sugito N."/>
            <person name="Takashima N."/>
            <person name="Fujii Y."/>
        </authorList>
    </citation>
    <scope>NUCLEOTIDE SEQUENCE [MRNA] (ISOFORM 1)</scope>
</reference>
<reference key="2">
    <citation type="journal article" date="2007" name="BMC Genomics">
        <title>The full-ORF clone resource of the German cDNA consortium.</title>
        <authorList>
            <person name="Bechtel S."/>
            <person name="Rosenfelder H."/>
            <person name="Duda A."/>
            <person name="Schmidt C.P."/>
            <person name="Ernst U."/>
            <person name="Wellenreuther R."/>
            <person name="Mehrle A."/>
            <person name="Schuster C."/>
            <person name="Bahr A."/>
            <person name="Bloecker H."/>
            <person name="Heubner D."/>
            <person name="Hoerlein A."/>
            <person name="Michel G."/>
            <person name="Wedler H."/>
            <person name="Koehrer K."/>
            <person name="Ottenwaelder B."/>
            <person name="Poustka A."/>
            <person name="Wiemann S."/>
            <person name="Schupp I."/>
        </authorList>
    </citation>
    <scope>NUCLEOTIDE SEQUENCE [LARGE SCALE MRNA] (ISOFORM 2)</scope>
    <source>
        <tissue>Small intestine</tissue>
    </source>
</reference>
<reference key="3">
    <citation type="submission" date="2005-07" db="EMBL/GenBank/DDBJ databases">
        <authorList>
            <person name="Mural R.J."/>
            <person name="Istrail S."/>
            <person name="Sutton G.G."/>
            <person name="Florea L."/>
            <person name="Halpern A.L."/>
            <person name="Mobarry C.M."/>
            <person name="Lippert R."/>
            <person name="Walenz B."/>
            <person name="Shatkay H."/>
            <person name="Dew I."/>
            <person name="Miller J.R."/>
            <person name="Flanigan M.J."/>
            <person name="Edwards N.J."/>
            <person name="Bolanos R."/>
            <person name="Fasulo D."/>
            <person name="Halldorsson B.V."/>
            <person name="Hannenhalli S."/>
            <person name="Turner R."/>
            <person name="Yooseph S."/>
            <person name="Lu F."/>
            <person name="Nusskern D.R."/>
            <person name="Shue B.C."/>
            <person name="Zheng X.H."/>
            <person name="Zhong F."/>
            <person name="Delcher A.L."/>
            <person name="Huson D.H."/>
            <person name="Kravitz S.A."/>
            <person name="Mouchard L."/>
            <person name="Reinert K."/>
            <person name="Remington K.A."/>
            <person name="Clark A.G."/>
            <person name="Waterman M.S."/>
            <person name="Eichler E.E."/>
            <person name="Adams M.D."/>
            <person name="Hunkapiller M.W."/>
            <person name="Myers E.W."/>
            <person name="Venter J.C."/>
        </authorList>
    </citation>
    <scope>NUCLEOTIDE SEQUENCE [LARGE SCALE GENOMIC DNA]</scope>
</reference>
<reference key="4">
    <citation type="journal article" date="2004" name="Genome Res.">
        <title>The status, quality, and expansion of the NIH full-length cDNA project: the Mammalian Gene Collection (MGC).</title>
        <authorList>
            <consortium name="The MGC Project Team"/>
        </authorList>
    </citation>
    <scope>NUCLEOTIDE SEQUENCE [LARGE SCALE MRNA] (ISOFORM 1)</scope>
    <source>
        <tissue>Brain</tissue>
        <tissue>Colon</tissue>
    </source>
</reference>
<reference key="5">
    <citation type="journal article" date="2004" name="Nat. Genet.">
        <title>Complete sequencing and characterization of 21,243 full-length human cDNAs.</title>
        <authorList>
            <person name="Ota T."/>
            <person name="Suzuki Y."/>
            <person name="Nishikawa T."/>
            <person name="Otsuki T."/>
            <person name="Sugiyama T."/>
            <person name="Irie R."/>
            <person name="Wakamatsu A."/>
            <person name="Hayashi K."/>
            <person name="Sato H."/>
            <person name="Nagai K."/>
            <person name="Kimura K."/>
            <person name="Makita H."/>
            <person name="Sekine M."/>
            <person name="Obayashi M."/>
            <person name="Nishi T."/>
            <person name="Shibahara T."/>
            <person name="Tanaka T."/>
            <person name="Ishii S."/>
            <person name="Yamamoto J."/>
            <person name="Saito K."/>
            <person name="Kawai Y."/>
            <person name="Isono Y."/>
            <person name="Nakamura Y."/>
            <person name="Nagahari K."/>
            <person name="Murakami K."/>
            <person name="Yasuda T."/>
            <person name="Iwayanagi T."/>
            <person name="Wagatsuma M."/>
            <person name="Shiratori A."/>
            <person name="Sudo H."/>
            <person name="Hosoiri T."/>
            <person name="Kaku Y."/>
            <person name="Kodaira H."/>
            <person name="Kondo H."/>
            <person name="Sugawara M."/>
            <person name="Takahashi M."/>
            <person name="Kanda K."/>
            <person name="Yokoi T."/>
            <person name="Furuya T."/>
            <person name="Kikkawa E."/>
            <person name="Omura Y."/>
            <person name="Abe K."/>
            <person name="Kamihara K."/>
            <person name="Katsuta N."/>
            <person name="Sato K."/>
            <person name="Tanikawa M."/>
            <person name="Yamazaki M."/>
            <person name="Ninomiya K."/>
            <person name="Ishibashi T."/>
            <person name="Yamashita H."/>
            <person name="Murakawa K."/>
            <person name="Fujimori K."/>
            <person name="Tanai H."/>
            <person name="Kimata M."/>
            <person name="Watanabe M."/>
            <person name="Hiraoka S."/>
            <person name="Chiba Y."/>
            <person name="Ishida S."/>
            <person name="Ono Y."/>
            <person name="Takiguchi S."/>
            <person name="Watanabe S."/>
            <person name="Yosida M."/>
            <person name="Hotuta T."/>
            <person name="Kusano J."/>
            <person name="Kanehori K."/>
            <person name="Takahashi-Fujii A."/>
            <person name="Hara H."/>
            <person name="Tanase T.-O."/>
            <person name="Nomura Y."/>
            <person name="Togiya S."/>
            <person name="Komai F."/>
            <person name="Hara R."/>
            <person name="Takeuchi K."/>
            <person name="Arita M."/>
            <person name="Imose N."/>
            <person name="Musashino K."/>
            <person name="Yuuki H."/>
            <person name="Oshima A."/>
            <person name="Sasaki N."/>
            <person name="Aotsuka S."/>
            <person name="Yoshikawa Y."/>
            <person name="Matsunawa H."/>
            <person name="Ichihara T."/>
            <person name="Shiohata N."/>
            <person name="Sano S."/>
            <person name="Moriya S."/>
            <person name="Momiyama H."/>
            <person name="Satoh N."/>
            <person name="Takami S."/>
            <person name="Terashima Y."/>
            <person name="Suzuki O."/>
            <person name="Nakagawa S."/>
            <person name="Senoh A."/>
            <person name="Mizoguchi H."/>
            <person name="Goto Y."/>
            <person name="Shimizu F."/>
            <person name="Wakebe H."/>
            <person name="Hishigaki H."/>
            <person name="Watanabe T."/>
            <person name="Sugiyama A."/>
            <person name="Takemoto M."/>
            <person name="Kawakami B."/>
            <person name="Yamazaki M."/>
            <person name="Watanabe K."/>
            <person name="Kumagai A."/>
            <person name="Itakura S."/>
            <person name="Fukuzumi Y."/>
            <person name="Fujimori Y."/>
            <person name="Komiyama M."/>
            <person name="Tashiro H."/>
            <person name="Tanigami A."/>
            <person name="Fujiwara T."/>
            <person name="Ono T."/>
            <person name="Yamada K."/>
            <person name="Fujii Y."/>
            <person name="Ozaki K."/>
            <person name="Hirao M."/>
            <person name="Ohmori Y."/>
            <person name="Kawabata A."/>
            <person name="Hikiji T."/>
            <person name="Kobatake N."/>
            <person name="Inagaki H."/>
            <person name="Ikema Y."/>
            <person name="Okamoto S."/>
            <person name="Okitani R."/>
            <person name="Kawakami T."/>
            <person name="Noguchi S."/>
            <person name="Itoh T."/>
            <person name="Shigeta K."/>
            <person name="Senba T."/>
            <person name="Matsumura K."/>
            <person name="Nakajima Y."/>
            <person name="Mizuno T."/>
            <person name="Morinaga M."/>
            <person name="Sasaki M."/>
            <person name="Togashi T."/>
            <person name="Oyama M."/>
            <person name="Hata H."/>
            <person name="Watanabe M."/>
            <person name="Komatsu T."/>
            <person name="Mizushima-Sugano J."/>
            <person name="Satoh T."/>
            <person name="Shirai Y."/>
            <person name="Takahashi Y."/>
            <person name="Nakagawa K."/>
            <person name="Okumura K."/>
            <person name="Nagase T."/>
            <person name="Nomura N."/>
            <person name="Kikuchi H."/>
            <person name="Masuho Y."/>
            <person name="Yamashita R."/>
            <person name="Nakai K."/>
            <person name="Yada T."/>
            <person name="Nakamura Y."/>
            <person name="Ohara O."/>
            <person name="Isogai T."/>
            <person name="Sugano S."/>
        </authorList>
    </citation>
    <scope>NUCLEOTIDE SEQUENCE [LARGE SCALE MRNA] OF 85-434</scope>
</reference>
<reference key="6">
    <citation type="journal article" date="2006" name="Cell">
        <title>Global, in vivo, and site-specific phosphorylation dynamics in signaling networks.</title>
        <authorList>
            <person name="Olsen J.V."/>
            <person name="Blagoev B."/>
            <person name="Gnad F."/>
            <person name="Macek B."/>
            <person name="Kumar C."/>
            <person name="Mortensen P."/>
            <person name="Mann M."/>
        </authorList>
    </citation>
    <scope>IDENTIFICATION BY MASS SPECTROMETRY [LARGE SCALE ANALYSIS]</scope>
    <source>
        <tissue>Cervix carcinoma</tissue>
    </source>
</reference>
<reference key="7">
    <citation type="journal article" date="2006" name="Nat. Biotechnol.">
        <title>A probability-based approach for high-throughput protein phosphorylation analysis and site localization.</title>
        <authorList>
            <person name="Beausoleil S.A."/>
            <person name="Villen J."/>
            <person name="Gerber S.A."/>
            <person name="Rush J."/>
            <person name="Gygi S.P."/>
        </authorList>
    </citation>
    <scope>PHOSPHORYLATION [LARGE SCALE ANALYSIS] AT SER-32</scope>
    <scope>IDENTIFICATION BY MASS SPECTROMETRY [LARGE SCALE ANALYSIS]</scope>
    <source>
        <tissue>Cervix carcinoma</tissue>
    </source>
</reference>
<reference key="8">
    <citation type="journal article" date="2008" name="Proc. Natl. Acad. Sci. U.S.A.">
        <title>A quantitative atlas of mitotic phosphorylation.</title>
        <authorList>
            <person name="Dephoure N."/>
            <person name="Zhou C."/>
            <person name="Villen J."/>
            <person name="Beausoleil S.A."/>
            <person name="Bakalarski C.E."/>
            <person name="Elledge S.J."/>
            <person name="Gygi S.P."/>
        </authorList>
    </citation>
    <scope>PHOSPHORYLATION [LARGE SCALE ANALYSIS] AT SER-30 AND SER-32</scope>
    <scope>IDENTIFICATION BY MASS SPECTROMETRY [LARGE SCALE ANALYSIS]</scope>
    <source>
        <tissue>Cervix carcinoma</tissue>
    </source>
</reference>
<reference key="9">
    <citation type="journal article" date="2009" name="Anal. Chem.">
        <title>Lys-N and trypsin cover complementary parts of the phosphoproteome in a refined SCX-based approach.</title>
        <authorList>
            <person name="Gauci S."/>
            <person name="Helbig A.O."/>
            <person name="Slijper M."/>
            <person name="Krijgsveld J."/>
            <person name="Heck A.J."/>
            <person name="Mohammed S."/>
        </authorList>
    </citation>
    <scope>ACETYLATION [LARGE SCALE ANALYSIS] AT ALA-2</scope>
    <scope>CLEAVAGE OF INITIATOR METHIONINE [LARGE SCALE ANALYSIS]</scope>
    <scope>IDENTIFICATION BY MASS SPECTROMETRY [LARGE SCALE ANALYSIS]</scope>
</reference>
<reference key="10">
    <citation type="journal article" date="2010" name="Sci. Signal.">
        <title>Quantitative phosphoproteomics reveals widespread full phosphorylation site occupancy during mitosis.</title>
        <authorList>
            <person name="Olsen J.V."/>
            <person name="Vermeulen M."/>
            <person name="Santamaria A."/>
            <person name="Kumar C."/>
            <person name="Miller M.L."/>
            <person name="Jensen L.J."/>
            <person name="Gnad F."/>
            <person name="Cox J."/>
            <person name="Jensen T.S."/>
            <person name="Nigg E.A."/>
            <person name="Brunak S."/>
            <person name="Mann M."/>
        </authorList>
    </citation>
    <scope>PHOSPHORYLATION [LARGE SCALE ANALYSIS] AT SER-30 AND SER-32</scope>
    <scope>IDENTIFICATION BY MASS SPECTROMETRY [LARGE SCALE ANALYSIS]</scope>
    <source>
        <tissue>Cervix carcinoma</tissue>
    </source>
</reference>
<reference key="11">
    <citation type="journal article" date="2011" name="Sci. Signal.">
        <title>System-wide temporal characterization of the proteome and phosphoproteome of human embryonic stem cell differentiation.</title>
        <authorList>
            <person name="Rigbolt K.T."/>
            <person name="Prokhorova T.A."/>
            <person name="Akimov V."/>
            <person name="Henningsen J."/>
            <person name="Johansen P.T."/>
            <person name="Kratchmarova I."/>
            <person name="Kassem M."/>
            <person name="Mann M."/>
            <person name="Olsen J.V."/>
            <person name="Blagoev B."/>
        </authorList>
    </citation>
    <scope>ACETYLATION [LARGE SCALE ANALYSIS] AT ALA-2</scope>
    <scope>PHOSPHORYLATION [LARGE SCALE ANALYSIS] AT SER-4; THR-6; THR-16; SER-17; SER-32 AND SER-104</scope>
    <scope>CLEAVAGE OF INITIATOR METHIONINE [LARGE SCALE ANALYSIS]</scope>
    <scope>IDENTIFICATION BY MASS SPECTROMETRY [LARGE SCALE ANALYSIS]</scope>
</reference>
<reference key="12">
    <citation type="journal article" date="2013" name="J. Proteome Res.">
        <title>Toward a comprehensive characterization of a human cancer cell phosphoproteome.</title>
        <authorList>
            <person name="Zhou H."/>
            <person name="Di Palma S."/>
            <person name="Preisinger C."/>
            <person name="Peng M."/>
            <person name="Polat A.N."/>
            <person name="Heck A.J."/>
            <person name="Mohammed S."/>
        </authorList>
    </citation>
    <scope>PHOSPHORYLATION [LARGE SCALE ANALYSIS] AT SER-4; SER-17; SER-32 AND SER-376</scope>
    <scope>IDENTIFICATION BY MASS SPECTROMETRY [LARGE SCALE ANALYSIS]</scope>
    <source>
        <tissue>Cervix carcinoma</tissue>
        <tissue>Erythroleukemia</tissue>
    </source>
</reference>
<reference key="13">
    <citation type="journal article" date="2014" name="Proc. Natl. Acad. Sci. U.S.A.">
        <title>Mapping of SUMO sites and analysis of SUMOylation changes induced by external stimuli.</title>
        <authorList>
            <person name="Impens F."/>
            <person name="Radoshevich L."/>
            <person name="Cossart P."/>
            <person name="Ribet D."/>
        </authorList>
    </citation>
    <scope>SUMOYLATION [LARGE SCALE ANALYSIS] AT LYS-375</scope>
    <scope>IDENTIFICATION BY MASS SPECTROMETRY [LARGE SCALE ANALYSIS]</scope>
</reference>
<reference key="14">
    <citation type="journal article" date="2017" name="Nat. Struct. Mol. Biol.">
        <title>Site-specific mapping of the human SUMO proteome reveals co-modification with phosphorylation.</title>
        <authorList>
            <person name="Hendriks I.A."/>
            <person name="Lyon D."/>
            <person name="Young C."/>
            <person name="Jensen L.J."/>
            <person name="Vertegaal A.C."/>
            <person name="Nielsen M.L."/>
        </authorList>
    </citation>
    <scope>SUMOYLATION [LARGE SCALE ANALYSIS] AT LYS-375</scope>
    <scope>IDENTIFICATION BY MASS SPECTROMETRY [LARGE SCALE ANALYSIS]</scope>
</reference>
<proteinExistence type="evidence at protein level"/>
<sequence>MAASDTERDGLAPEKTSPDRDKKKEQSEVSVSPRASKHHYSRSRSRSRERKRKSDNEGRKHRSRSRSKEGRRHESKDKSSKKHKSEEHNDKEHSSDKGRERLNSSENGEDRHKRKERKSSRGRSHSRSRSRERRHRSRSRERKKSRSRSRERKKSRSRSRERKKSRSRSRERKRRIRSRSRSRSRHRHRTRSRSRTRSRSRDRKKRIEKPRRFSRSLSRTPSPPPFRGRNTAMDAQEALARRLERAKKLQEQREKEMVEKQKQQEIAAAAATGGSVLNVAALLASGTQVTPQIAMAAQMAALQAKALAETGIAVPSYYNPAAVNPMKFAEQEKKRKMLWQGKKEGDKSQSAEIWEKLNFGNKDQNVKFRKLMGIKSEDEAGCSSVDEESYKTLKQQEEVFRNLDAQYEMARSQTHTQRGMGLGFTSSMRGMDAV</sequence>
<comment type="interaction">
    <interactant intactId="EBI-953753">
        <id>Q7L4I2</id>
    </interactant>
    <interactant intactId="EBI-11745576">
        <id>Q6PJH3</id>
        <label>AKAP9</label>
    </interactant>
    <organismsDiffer>false</organismsDiffer>
    <experiments>3</experiments>
</comment>
<comment type="interaction">
    <interactant intactId="EBI-953753">
        <id>Q7L4I2</id>
    </interactant>
    <interactant intactId="EBI-11522780">
        <id>Q96DZ9-2</id>
        <label>CMTM5</label>
    </interactant>
    <organismsDiffer>false</organismsDiffer>
    <experiments>3</experiments>
</comment>
<comment type="interaction">
    <interactant intactId="EBI-953753">
        <id>Q7L4I2</id>
    </interactant>
    <interactant intactId="EBI-1188472">
        <id>P78358</id>
        <label>CTAG1B</label>
    </interactant>
    <organismsDiffer>false</organismsDiffer>
    <experiments>3</experiments>
</comment>
<comment type="interaction">
    <interactant intactId="EBI-953753">
        <id>Q7L4I2</id>
    </interactant>
    <interactant intactId="EBI-11953718">
        <id>Q8NEY1-3</id>
        <label>NAV1</label>
    </interactant>
    <organismsDiffer>false</organismsDiffer>
    <experiments>3</experiments>
</comment>
<comment type="interaction">
    <interactant intactId="EBI-953753">
        <id>Q7L4I2</id>
    </interactant>
    <interactant intactId="EBI-357275">
        <id>Q99471</id>
        <label>PFDN5</label>
    </interactant>
    <organismsDiffer>false</organismsDiffer>
    <experiments>3</experiments>
</comment>
<comment type="interaction">
    <interactant intactId="EBI-953753">
        <id>Q7L4I2</id>
    </interactant>
    <interactant intactId="EBI-1047489">
        <id>Q5PRF9</id>
        <label>SAMD4B</label>
    </interactant>
    <organismsDiffer>false</organismsDiffer>
    <experiments>3</experiments>
</comment>
<comment type="interaction">
    <interactant intactId="EBI-953753">
        <id>Q7L4I2</id>
    </interactant>
    <interactant intactId="EBI-593303">
        <id>P78362</id>
        <label>SRPK2</label>
    </interactant>
    <organismsDiffer>false</organismsDiffer>
    <experiments>2</experiments>
</comment>
<comment type="interaction">
    <interactant intactId="EBI-953753">
        <id>Q7L4I2</id>
    </interactant>
    <interactant intactId="EBI-947187">
        <id>Q9UHD9</id>
        <label>UBQLN2</label>
    </interactant>
    <organismsDiffer>false</organismsDiffer>
    <experiments>3</experiments>
</comment>
<comment type="interaction">
    <interactant intactId="EBI-10256202">
        <id>Q7L4I2-2</id>
    </interactant>
    <interactant intactId="EBI-2548702">
        <id>Q96DZ9</id>
        <label>CMTM5</label>
    </interactant>
    <organismsDiffer>false</organismsDiffer>
    <experiments>3</experiments>
</comment>
<comment type="interaction">
    <interactant intactId="EBI-10256202">
        <id>Q7L4I2-2</id>
    </interactant>
    <interactant intactId="EBI-618309">
        <id>Q08379</id>
        <label>GOLGA2</label>
    </interactant>
    <organismsDiffer>false</organismsDiffer>
    <experiments>3</experiments>
</comment>
<comment type="interaction">
    <interactant intactId="EBI-10256202">
        <id>Q7L4I2-2</id>
    </interactant>
    <interactant intactId="EBI-749265">
        <id>Q8N6L0</id>
        <label>KASH5</label>
    </interactant>
    <organismsDiffer>false</organismsDiffer>
    <experiments>3</experiments>
</comment>
<comment type="interaction">
    <interactant intactId="EBI-10256202">
        <id>Q7L4I2-2</id>
    </interactant>
    <interactant intactId="EBI-302345">
        <id>Q8ND90</id>
        <label>PNMA1</label>
    </interactant>
    <organismsDiffer>false</organismsDiffer>
    <experiments>3</experiments>
</comment>
<comment type="interaction">
    <interactant intactId="EBI-10256202">
        <id>Q7L4I2-2</id>
    </interactant>
    <interactant intactId="EBI-726876">
        <id>Q6NUQ1</id>
        <label>RINT1</label>
    </interactant>
    <organismsDiffer>false</organismsDiffer>
    <experiments>3</experiments>
</comment>
<comment type="interaction">
    <interactant intactId="EBI-10256202">
        <id>Q7L4I2-2</id>
    </interactant>
    <interactant intactId="EBI-740098">
        <id>P36406</id>
        <label>TRIM23</label>
    </interactant>
    <organismsDiffer>false</organismsDiffer>
    <experiments>3</experiments>
</comment>
<comment type="interaction">
    <interactant intactId="EBI-10256202">
        <id>Q7L4I2-2</id>
    </interactant>
    <interactant intactId="EBI-2130429">
        <id>Q9BYV2</id>
        <label>TRIM54</label>
    </interactant>
    <organismsDiffer>false</organismsDiffer>
    <experiments>3</experiments>
</comment>
<comment type="interaction">
    <interactant intactId="EBI-10256202">
        <id>Q7L4I2-2</id>
    </interactant>
    <interactant intactId="EBI-741480">
        <id>Q9UMX0</id>
        <label>UBQLN1</label>
    </interactant>
    <organismsDiffer>false</organismsDiffer>
    <experiments>3</experiments>
</comment>
<comment type="alternative products">
    <event type="alternative splicing"/>
    <isoform>
        <id>Q7L4I2-1</id>
        <name>1</name>
        <sequence type="displayed"/>
    </isoform>
    <isoform>
        <id>Q7L4I2-2</id>
        <name>2</name>
        <sequence type="described" ref="VSP_030440"/>
    </isoform>
</comment>
<comment type="similarity">
    <text evidence="4">Belongs to the RSRC2 family.</text>
</comment>
<comment type="sequence caution" evidence="4">
    <conflict type="erroneous initiation">
        <sequence resource="EMBL-CDS" id="BAB14755"/>
    </conflict>
    <text>Truncated N-terminus.</text>
</comment>
<comment type="sequence caution" evidence="4">
    <conflict type="erroneous gene model prediction">
        <sequence resource="EMBL-CDS" id="EAW98327"/>
    </conflict>
</comment>